<dbReference type="EMBL" id="CP001340">
    <property type="protein sequence ID" value="ACL95789.1"/>
    <property type="molecule type" value="Genomic_DNA"/>
</dbReference>
<dbReference type="RefSeq" id="WP_010920102.1">
    <property type="nucleotide sequence ID" value="NC_011916.1"/>
</dbReference>
<dbReference type="SMR" id="B8GYL6"/>
<dbReference type="KEGG" id="ccs:CCNA_02324"/>
<dbReference type="PATRIC" id="fig|565050.3.peg.2275"/>
<dbReference type="HOGENOM" id="CLU_054493_0_1_5"/>
<dbReference type="OrthoDB" id="9793753at2"/>
<dbReference type="PhylomeDB" id="B8GYL6"/>
<dbReference type="Proteomes" id="UP000001364">
    <property type="component" value="Chromosome"/>
</dbReference>
<dbReference type="GO" id="GO:0005737">
    <property type="term" value="C:cytoplasm"/>
    <property type="evidence" value="ECO:0007669"/>
    <property type="project" value="UniProtKB-SubCell"/>
</dbReference>
<dbReference type="GO" id="GO:0044183">
    <property type="term" value="F:protein folding chaperone"/>
    <property type="evidence" value="ECO:0007669"/>
    <property type="project" value="TreeGrafter"/>
</dbReference>
<dbReference type="GO" id="GO:0051082">
    <property type="term" value="F:unfolded protein binding"/>
    <property type="evidence" value="ECO:0007669"/>
    <property type="project" value="UniProtKB-UniRule"/>
</dbReference>
<dbReference type="GO" id="GO:0042026">
    <property type="term" value="P:protein refolding"/>
    <property type="evidence" value="ECO:0007669"/>
    <property type="project" value="TreeGrafter"/>
</dbReference>
<dbReference type="CDD" id="cd00498">
    <property type="entry name" value="Hsp33"/>
    <property type="match status" value="1"/>
</dbReference>
<dbReference type="Gene3D" id="1.10.287.480">
    <property type="entry name" value="helix hairpin bin"/>
    <property type="match status" value="1"/>
</dbReference>
<dbReference type="Gene3D" id="3.55.30.10">
    <property type="entry name" value="Hsp33 domain"/>
    <property type="match status" value="1"/>
</dbReference>
<dbReference type="Gene3D" id="3.90.1280.10">
    <property type="entry name" value="HSP33 redox switch-like"/>
    <property type="match status" value="1"/>
</dbReference>
<dbReference type="HAMAP" id="MF_00117">
    <property type="entry name" value="HslO"/>
    <property type="match status" value="1"/>
</dbReference>
<dbReference type="InterPro" id="IPR000397">
    <property type="entry name" value="Heat_shock_Hsp33"/>
</dbReference>
<dbReference type="InterPro" id="IPR016154">
    <property type="entry name" value="Heat_shock_Hsp33_C"/>
</dbReference>
<dbReference type="InterPro" id="IPR016153">
    <property type="entry name" value="Heat_shock_Hsp33_N"/>
</dbReference>
<dbReference type="InterPro" id="IPR023212">
    <property type="entry name" value="Hsp33_helix_hairpin_bin_dom_sf"/>
</dbReference>
<dbReference type="NCBIfam" id="NF002386">
    <property type="entry name" value="PRK01402.1"/>
    <property type="match status" value="1"/>
</dbReference>
<dbReference type="PANTHER" id="PTHR30111">
    <property type="entry name" value="33 KDA CHAPERONIN"/>
    <property type="match status" value="1"/>
</dbReference>
<dbReference type="PANTHER" id="PTHR30111:SF1">
    <property type="entry name" value="33 KDA CHAPERONIN"/>
    <property type="match status" value="1"/>
</dbReference>
<dbReference type="Pfam" id="PF01430">
    <property type="entry name" value="HSP33"/>
    <property type="match status" value="1"/>
</dbReference>
<dbReference type="PIRSF" id="PIRSF005261">
    <property type="entry name" value="Heat_shock_Hsp33"/>
    <property type="match status" value="1"/>
</dbReference>
<dbReference type="SUPFAM" id="SSF64397">
    <property type="entry name" value="Hsp33 domain"/>
    <property type="match status" value="1"/>
</dbReference>
<dbReference type="SUPFAM" id="SSF118352">
    <property type="entry name" value="HSP33 redox switch-like"/>
    <property type="match status" value="1"/>
</dbReference>
<gene>
    <name evidence="1" type="primary">hslO</name>
    <name type="ordered locus">CCNA_02324</name>
</gene>
<comment type="function">
    <text evidence="1">Redox regulated molecular chaperone. Protects both thermally unfolding and oxidatively damaged proteins from irreversible aggregation. Plays an important role in the bacterial defense system toward oxidative stress.</text>
</comment>
<comment type="subcellular location">
    <subcellularLocation>
        <location evidence="1">Cytoplasm</location>
    </subcellularLocation>
</comment>
<comment type="PTM">
    <text evidence="1">Under oxidizing conditions two disulfide bonds are formed involving the reactive cysteines. Under reducing conditions zinc is bound to the reactive cysteines and the protein is inactive.</text>
</comment>
<comment type="similarity">
    <text evidence="1">Belongs to the HSP33 family.</text>
</comment>
<proteinExistence type="inferred from homology"/>
<organism>
    <name type="scientific">Caulobacter vibrioides (strain NA1000 / CB15N)</name>
    <name type="common">Caulobacter crescentus</name>
    <dbReference type="NCBI Taxonomy" id="565050"/>
    <lineage>
        <taxon>Bacteria</taxon>
        <taxon>Pseudomonadati</taxon>
        <taxon>Pseudomonadota</taxon>
        <taxon>Alphaproteobacteria</taxon>
        <taxon>Caulobacterales</taxon>
        <taxon>Caulobacteraceae</taxon>
        <taxon>Caulobacter</taxon>
    </lineage>
</organism>
<accession>B8GYL6</accession>
<feature type="chain" id="PRO_1000119254" description="33 kDa chaperonin">
    <location>
        <begin position="1"/>
        <end position="302"/>
    </location>
</feature>
<feature type="disulfide bond" description="Redox-active" evidence="1">
    <location>
        <begin position="255"/>
        <end position="257"/>
    </location>
</feature>
<feature type="disulfide bond" description="Redox-active" evidence="1">
    <location>
        <begin position="288"/>
        <end position="291"/>
    </location>
</feature>
<protein>
    <recommendedName>
        <fullName evidence="1">33 kDa chaperonin</fullName>
    </recommendedName>
    <alternativeName>
        <fullName evidence="1">Heat shock protein 33 homolog</fullName>
        <shortName evidence="1">HSP33</shortName>
    </alternativeName>
</protein>
<sequence>MTDIAPDTGVLDDVVSAFQIENLPVRGRVVRLGAAIDEVLTRHDYPEPVANLLGEACALAALVGSSLKFEGRLIVQAQGDGPVRYVVVDYDTSGGLRGYCRFDPEEVAAVSEGFVRPGAKTLLGGGVFIMTLDQGPDMDRYQGVTPIEGETLALCAEQYFAQSEQTPTRVRLAVGQADTGQGATWRAGGILIQVIAGDQARGETQDAWTHVQALFETTGEDELIDPTVSTPTLLWRLFNEDGVRLLDEKPLKAFCRCSEDRIGVVMDSFSAEEVAEMVEPDGKIHVTCEYCSRIYKLDPPGA</sequence>
<evidence type="ECO:0000255" key="1">
    <source>
        <dbReference type="HAMAP-Rule" id="MF_00117"/>
    </source>
</evidence>
<reference key="1">
    <citation type="journal article" date="2010" name="J. Bacteriol.">
        <title>The genetic basis of laboratory adaptation in Caulobacter crescentus.</title>
        <authorList>
            <person name="Marks M.E."/>
            <person name="Castro-Rojas C.M."/>
            <person name="Teiling C."/>
            <person name="Du L."/>
            <person name="Kapatral V."/>
            <person name="Walunas T.L."/>
            <person name="Crosson S."/>
        </authorList>
    </citation>
    <scope>NUCLEOTIDE SEQUENCE [LARGE SCALE GENOMIC DNA]</scope>
    <source>
        <strain>NA1000 / CB15N</strain>
    </source>
</reference>
<name>HSLO_CAUVN</name>
<keyword id="KW-0143">Chaperone</keyword>
<keyword id="KW-0963">Cytoplasm</keyword>
<keyword id="KW-1015">Disulfide bond</keyword>
<keyword id="KW-0676">Redox-active center</keyword>
<keyword id="KW-1185">Reference proteome</keyword>
<keyword id="KW-0346">Stress response</keyword>
<keyword id="KW-0862">Zinc</keyword>